<accession>O95707</accession>
<accession>Q5XKL7</accession>
<accession>Q6FHW9</accession>
<accession>Q9UQQ3</accession>
<comment type="function">
    <text evidence="1 2 5">Component of ribonuclease P, a ribonucleoprotein complex that generates mature tRNA molecules by cleaving their 5'-ends.</text>
</comment>
<comment type="subunit">
    <text evidence="1 2 3 4 5">Component of nuclear RNase P and RNase MRP ribonucleoproteins (PubMed:10024167, PubMed:10352175, PubMed:30454648). RNase P consists of a catalytic RNA moiety and 10 different protein chains; POP1, POP4, POP5, POP7, RPP14, RPP21, RPP25, RPP30, RPP38 and RPP40 (PubMed:16723659, PubMed:30454648). Within the RNase P complex, POP1, POP7 and RPP25 form the 'finger' subcomplex, POP5, RPP14, RPP40 and homodimeric RPP30 form the 'palm' subcomplex, and RPP21, POP4 and RPP38 form the 'wrist' subcomplex. All subunits of the RNase P complex interact with the catalytic RNA (PubMed:30454648). Several subunits of RNase P are also part of the RNase MRP complex. RNase MRP consists of a catalytic RNA moiety and about 8 protein subunits; POP1, POP7, RPP25, RPP30, RPP38, RPP40 and possibly also POP4 and POP5 (PubMed:15096576).</text>
</comment>
<comment type="interaction">
    <interactant intactId="EBI-366477">
        <id>O95707</id>
    </interactant>
    <interactant intactId="EBI-366741">
        <id>Q99575</id>
        <label>POP1</label>
    </interactant>
    <organismsDiffer>false</organismsDiffer>
    <experiments>5</experiments>
</comment>
<comment type="interaction">
    <interactant intactId="EBI-366477">
        <id>O95707</id>
    </interactant>
    <interactant intactId="EBI-366525">
        <id>Q969H6</id>
        <label>POP5</label>
    </interactant>
    <organismsDiffer>false</organismsDiffer>
    <experiments>5</experiments>
</comment>
<comment type="interaction">
    <interactant intactId="EBI-366477">
        <id>O95707</id>
    </interactant>
    <interactant intactId="EBI-366542">
        <id>O95059</id>
        <label>RPP14</label>
    </interactant>
    <organismsDiffer>false</organismsDiffer>
    <experiments>4</experiments>
</comment>
<comment type="interaction">
    <interactant intactId="EBI-366477">
        <id>O95707</id>
    </interactant>
    <interactant intactId="EBI-366570">
        <id>Q9BUL9</id>
        <label>RPP25</label>
    </interactant>
    <organismsDiffer>false</organismsDiffer>
    <experiments>5</experiments>
</comment>
<comment type="interaction">
    <interactant intactId="EBI-366477">
        <id>O95707</id>
    </interactant>
    <interactant intactId="EBI-366493">
        <id>P78345</id>
        <label>RPP38</label>
    </interactant>
    <organismsDiffer>false</organismsDiffer>
    <experiments>5</experiments>
</comment>
<comment type="subcellular location">
    <subcellularLocation>
        <location evidence="2">Nucleus</location>
        <location evidence="2">Nucleolus</location>
    </subcellularLocation>
</comment>
<comment type="similarity">
    <text evidence="7">Belongs to the eukaryotic/archaeal RNase P protein component 1 family.</text>
</comment>
<name>RPP29_HUMAN</name>
<gene>
    <name type="primary">POP4</name>
    <name type="synonym">RPP29</name>
</gene>
<proteinExistence type="evidence at protein level"/>
<reference key="1">
    <citation type="journal article" date="1999" name="RNA">
        <title>Rpp14 and Rpp29, two protein subunits of human ribonuclease P.</title>
        <authorList>
            <person name="Jarrous N."/>
            <person name="Eder P.S."/>
            <person name="Wesolowski D."/>
            <person name="Altman S."/>
        </authorList>
    </citation>
    <scope>NUCLEOTIDE SEQUENCE [MRNA]</scope>
    <scope>PROTEIN SEQUENCE OF 86-95</scope>
    <scope>FUNCTION</scope>
    <scope>SUBUNIT</scope>
</reference>
<reference key="2">
    <citation type="journal article" date="1999" name="Nucleic Acids Res.">
        <title>hPop4: a new protein subunit of the human RNase MRP and RNase P ribonucleoprotein complexes.</title>
        <authorList>
            <person name="van Eenennaam H."/>
            <person name="Pruijn G.J.M."/>
            <person name="van Venrooij W.J."/>
        </authorList>
    </citation>
    <scope>NUCLEOTIDE SEQUENCE [MRNA]</scope>
    <scope>FUNCTION</scope>
    <scope>SUBCELLULAR LOCATION</scope>
    <scope>SUBUNIT</scope>
</reference>
<reference key="3">
    <citation type="submission" date="2004-06" db="EMBL/GenBank/DDBJ databases">
        <title>Cloning of human full open reading frames in Gateway(TM) system entry vector (pDONR201).</title>
        <authorList>
            <person name="Ebert L."/>
            <person name="Schick M."/>
            <person name="Neubert P."/>
            <person name="Schatten R."/>
            <person name="Henze S."/>
            <person name="Korn B."/>
        </authorList>
    </citation>
    <scope>NUCLEOTIDE SEQUENCE [LARGE SCALE MRNA]</scope>
</reference>
<reference key="4">
    <citation type="journal article" date="2004" name="Nat. Genet.">
        <title>Complete sequencing and characterization of 21,243 full-length human cDNAs.</title>
        <authorList>
            <person name="Ota T."/>
            <person name="Suzuki Y."/>
            <person name="Nishikawa T."/>
            <person name="Otsuki T."/>
            <person name="Sugiyama T."/>
            <person name="Irie R."/>
            <person name="Wakamatsu A."/>
            <person name="Hayashi K."/>
            <person name="Sato H."/>
            <person name="Nagai K."/>
            <person name="Kimura K."/>
            <person name="Makita H."/>
            <person name="Sekine M."/>
            <person name="Obayashi M."/>
            <person name="Nishi T."/>
            <person name="Shibahara T."/>
            <person name="Tanaka T."/>
            <person name="Ishii S."/>
            <person name="Yamamoto J."/>
            <person name="Saito K."/>
            <person name="Kawai Y."/>
            <person name="Isono Y."/>
            <person name="Nakamura Y."/>
            <person name="Nagahari K."/>
            <person name="Murakami K."/>
            <person name="Yasuda T."/>
            <person name="Iwayanagi T."/>
            <person name="Wagatsuma M."/>
            <person name="Shiratori A."/>
            <person name="Sudo H."/>
            <person name="Hosoiri T."/>
            <person name="Kaku Y."/>
            <person name="Kodaira H."/>
            <person name="Kondo H."/>
            <person name="Sugawara M."/>
            <person name="Takahashi M."/>
            <person name="Kanda K."/>
            <person name="Yokoi T."/>
            <person name="Furuya T."/>
            <person name="Kikkawa E."/>
            <person name="Omura Y."/>
            <person name="Abe K."/>
            <person name="Kamihara K."/>
            <person name="Katsuta N."/>
            <person name="Sato K."/>
            <person name="Tanikawa M."/>
            <person name="Yamazaki M."/>
            <person name="Ninomiya K."/>
            <person name="Ishibashi T."/>
            <person name="Yamashita H."/>
            <person name="Murakawa K."/>
            <person name="Fujimori K."/>
            <person name="Tanai H."/>
            <person name="Kimata M."/>
            <person name="Watanabe M."/>
            <person name="Hiraoka S."/>
            <person name="Chiba Y."/>
            <person name="Ishida S."/>
            <person name="Ono Y."/>
            <person name="Takiguchi S."/>
            <person name="Watanabe S."/>
            <person name="Yosida M."/>
            <person name="Hotuta T."/>
            <person name="Kusano J."/>
            <person name="Kanehori K."/>
            <person name="Takahashi-Fujii A."/>
            <person name="Hara H."/>
            <person name="Tanase T.-O."/>
            <person name="Nomura Y."/>
            <person name="Togiya S."/>
            <person name="Komai F."/>
            <person name="Hara R."/>
            <person name="Takeuchi K."/>
            <person name="Arita M."/>
            <person name="Imose N."/>
            <person name="Musashino K."/>
            <person name="Yuuki H."/>
            <person name="Oshima A."/>
            <person name="Sasaki N."/>
            <person name="Aotsuka S."/>
            <person name="Yoshikawa Y."/>
            <person name="Matsunawa H."/>
            <person name="Ichihara T."/>
            <person name="Shiohata N."/>
            <person name="Sano S."/>
            <person name="Moriya S."/>
            <person name="Momiyama H."/>
            <person name="Satoh N."/>
            <person name="Takami S."/>
            <person name="Terashima Y."/>
            <person name="Suzuki O."/>
            <person name="Nakagawa S."/>
            <person name="Senoh A."/>
            <person name="Mizoguchi H."/>
            <person name="Goto Y."/>
            <person name="Shimizu F."/>
            <person name="Wakebe H."/>
            <person name="Hishigaki H."/>
            <person name="Watanabe T."/>
            <person name="Sugiyama A."/>
            <person name="Takemoto M."/>
            <person name="Kawakami B."/>
            <person name="Yamazaki M."/>
            <person name="Watanabe K."/>
            <person name="Kumagai A."/>
            <person name="Itakura S."/>
            <person name="Fukuzumi Y."/>
            <person name="Fujimori Y."/>
            <person name="Komiyama M."/>
            <person name="Tashiro H."/>
            <person name="Tanigami A."/>
            <person name="Fujiwara T."/>
            <person name="Ono T."/>
            <person name="Yamada K."/>
            <person name="Fujii Y."/>
            <person name="Ozaki K."/>
            <person name="Hirao M."/>
            <person name="Ohmori Y."/>
            <person name="Kawabata A."/>
            <person name="Hikiji T."/>
            <person name="Kobatake N."/>
            <person name="Inagaki H."/>
            <person name="Ikema Y."/>
            <person name="Okamoto S."/>
            <person name="Okitani R."/>
            <person name="Kawakami T."/>
            <person name="Noguchi S."/>
            <person name="Itoh T."/>
            <person name="Shigeta K."/>
            <person name="Senba T."/>
            <person name="Matsumura K."/>
            <person name="Nakajima Y."/>
            <person name="Mizuno T."/>
            <person name="Morinaga M."/>
            <person name="Sasaki M."/>
            <person name="Togashi T."/>
            <person name="Oyama M."/>
            <person name="Hata H."/>
            <person name="Watanabe M."/>
            <person name="Komatsu T."/>
            <person name="Mizushima-Sugano J."/>
            <person name="Satoh T."/>
            <person name="Shirai Y."/>
            <person name="Takahashi Y."/>
            <person name="Nakagawa K."/>
            <person name="Okumura K."/>
            <person name="Nagase T."/>
            <person name="Nomura N."/>
            <person name="Kikuchi H."/>
            <person name="Masuho Y."/>
            <person name="Yamashita R."/>
            <person name="Nakai K."/>
            <person name="Yada T."/>
            <person name="Nakamura Y."/>
            <person name="Ohara O."/>
            <person name="Isogai T."/>
            <person name="Sugano S."/>
        </authorList>
    </citation>
    <scope>NUCLEOTIDE SEQUENCE [LARGE SCALE MRNA]</scope>
    <source>
        <tissue>Brain</tissue>
    </source>
</reference>
<reference key="5">
    <citation type="journal article" date="2004" name="Genome Res.">
        <title>The status, quality, and expansion of the NIH full-length cDNA project: the Mammalian Gene Collection (MGC).</title>
        <authorList>
            <consortium name="The MGC Project Team"/>
        </authorList>
    </citation>
    <scope>NUCLEOTIDE SEQUENCE [LARGE SCALE MRNA]</scope>
    <source>
        <tissue>Lung</tissue>
        <tissue>Lymph</tissue>
    </source>
</reference>
<reference key="6">
    <citation type="journal article" date="1999" name="J. Cell Biol.">
        <title>Localization in the nucleolus and coiled bodies of protein subunits of the ribonucleoprotein ribonuclease P.</title>
        <authorList>
            <person name="Jarrous N."/>
            <person name="Wolenski J.S."/>
            <person name="Wesolowski D."/>
            <person name="Lee C."/>
            <person name="Altman S."/>
        </authorList>
    </citation>
    <scope>SUBCELLULAR LOCATION</scope>
</reference>
<reference key="7">
    <citation type="journal article" date="2004" name="Nucleic Acids Res.">
        <title>Mutual interactions between subunits of the human RNase MRP ribonucleoprotein complex.</title>
        <authorList>
            <person name="Welting T.J."/>
            <person name="van Venrooij W.J."/>
            <person name="Pruijn G.J."/>
        </authorList>
    </citation>
    <scope>IDENTIFICATION IN THE RNASE P AND RNASE MRP COMPLEXES</scope>
    <scope>SUBUNIT</scope>
</reference>
<reference key="8">
    <citation type="journal article" date="2006" name="RNA">
        <title>Differential association of protein subunits with the human RNase MRP and RNase P complexes.</title>
        <authorList>
            <person name="Welting T.J."/>
            <person name="Kikkert B.J."/>
            <person name="van Venrooij W.J."/>
            <person name="Pruijn G.J."/>
        </authorList>
    </citation>
    <scope>IDENTIFICATION IN RNASE P COMPLEX</scope>
    <scope>SUBUNIT</scope>
</reference>
<reference key="9">
    <citation type="journal article" date="2007" name="Science">
        <title>ATM and ATR substrate analysis reveals extensive protein networks responsive to DNA damage.</title>
        <authorList>
            <person name="Matsuoka S."/>
            <person name="Ballif B.A."/>
            <person name="Smogorzewska A."/>
            <person name="McDonald E.R. III"/>
            <person name="Hurov K.E."/>
            <person name="Luo J."/>
            <person name="Bakalarski C.E."/>
            <person name="Zhao Z."/>
            <person name="Solimini N."/>
            <person name="Lerenthal Y."/>
            <person name="Shiloh Y."/>
            <person name="Gygi S.P."/>
            <person name="Elledge S.J."/>
        </authorList>
    </citation>
    <scope>PHOSPHORYLATION [LARGE SCALE ANALYSIS] AT SER-10</scope>
    <scope>IDENTIFICATION BY MASS SPECTROMETRY [LARGE SCALE ANALYSIS]</scope>
    <source>
        <tissue>Embryonic kidney</tissue>
    </source>
</reference>
<reference key="10">
    <citation type="journal article" date="2011" name="BMC Syst. Biol.">
        <title>Initial characterization of the human central proteome.</title>
        <authorList>
            <person name="Burkard T.R."/>
            <person name="Planyavsky M."/>
            <person name="Kaupe I."/>
            <person name="Breitwieser F.P."/>
            <person name="Buerckstuemmer T."/>
            <person name="Bennett K.L."/>
            <person name="Superti-Furga G."/>
            <person name="Colinge J."/>
        </authorList>
    </citation>
    <scope>IDENTIFICATION BY MASS SPECTROMETRY [LARGE SCALE ANALYSIS]</scope>
</reference>
<reference key="11">
    <citation type="journal article" date="2013" name="J. Proteome Res.">
        <title>Toward a comprehensive characterization of a human cancer cell phosphoproteome.</title>
        <authorList>
            <person name="Zhou H."/>
            <person name="Di Palma S."/>
            <person name="Preisinger C."/>
            <person name="Peng M."/>
            <person name="Polat A.N."/>
            <person name="Heck A.J."/>
            <person name="Mohammed S."/>
        </authorList>
    </citation>
    <scope>PHOSPHORYLATION [LARGE SCALE ANALYSIS] AT SER-10</scope>
    <scope>IDENTIFICATION BY MASS SPECTROMETRY [LARGE SCALE ANALYSIS]</scope>
    <source>
        <tissue>Erythroleukemia</tissue>
    </source>
</reference>
<reference evidence="8 9" key="12">
    <citation type="journal article" date="2018" name="Cell">
        <title>Cryo-EM Structure of the Human Ribonuclease P Holoenzyme.</title>
        <authorList>
            <person name="Wu J."/>
            <person name="Niu S."/>
            <person name="Tan M."/>
            <person name="Huang C."/>
            <person name="Li M."/>
            <person name="Song Y."/>
            <person name="Wang Q."/>
            <person name="Chen J."/>
            <person name="Shi S."/>
            <person name="Lan P."/>
            <person name="Lei M."/>
        </authorList>
    </citation>
    <scope>STRUCTURE BY ELECTRON MICROSCOPY (3.66 ANGSTROMS) OF RNASE P HOLOENZYME IN COMPLEX WITH TRNA</scope>
    <scope>FUNCTION</scope>
    <scope>SUBUNIT</scope>
</reference>
<evidence type="ECO:0000269" key="1">
    <source>
    </source>
</evidence>
<evidence type="ECO:0000269" key="2">
    <source>
    </source>
</evidence>
<evidence type="ECO:0000269" key="3">
    <source>
    </source>
</evidence>
<evidence type="ECO:0000269" key="4">
    <source>
    </source>
</evidence>
<evidence type="ECO:0000269" key="5">
    <source>
    </source>
</evidence>
<evidence type="ECO:0000303" key="6">
    <source>
    </source>
</evidence>
<evidence type="ECO:0000305" key="7"/>
<evidence type="ECO:0007744" key="8">
    <source>
        <dbReference type="PDB" id="6AHR"/>
    </source>
</evidence>
<evidence type="ECO:0007744" key="9">
    <source>
        <dbReference type="PDB" id="6AHU"/>
    </source>
</evidence>
<evidence type="ECO:0007744" key="10">
    <source>
    </source>
</evidence>
<evidence type="ECO:0007744" key="11">
    <source>
    </source>
</evidence>
<keyword id="KW-0002">3D-structure</keyword>
<keyword id="KW-0903">Direct protein sequencing</keyword>
<keyword id="KW-0539">Nucleus</keyword>
<keyword id="KW-0597">Phosphoprotein</keyword>
<keyword id="KW-1267">Proteomics identification</keyword>
<keyword id="KW-1185">Reference proteome</keyword>
<keyword id="KW-0694">RNA-binding</keyword>
<keyword id="KW-0819">tRNA processing</keyword>
<dbReference type="EMBL" id="AF001176">
    <property type="protein sequence ID" value="AAD00893.2"/>
    <property type="molecule type" value="mRNA"/>
</dbReference>
<dbReference type="EMBL" id="Y18863">
    <property type="protein sequence ID" value="CAB39167.1"/>
    <property type="molecule type" value="mRNA"/>
</dbReference>
<dbReference type="EMBL" id="CR536569">
    <property type="protein sequence ID" value="CAG38806.1"/>
    <property type="molecule type" value="mRNA"/>
</dbReference>
<dbReference type="EMBL" id="AK314790">
    <property type="protein sequence ID" value="BAG37321.1"/>
    <property type="molecule type" value="mRNA"/>
</dbReference>
<dbReference type="EMBL" id="BC004438">
    <property type="protein sequence ID" value="AAH04438.1"/>
    <property type="molecule type" value="mRNA"/>
</dbReference>
<dbReference type="EMBL" id="BC006098">
    <property type="protein sequence ID" value="AAH06098.1"/>
    <property type="molecule type" value="mRNA"/>
</dbReference>
<dbReference type="CCDS" id="CCDS12416.1"/>
<dbReference type="RefSeq" id="NP_006618.1">
    <property type="nucleotide sequence ID" value="NM_006627.3"/>
</dbReference>
<dbReference type="PDB" id="6AHR">
    <property type="method" value="EM"/>
    <property type="resolution" value="3.92 A"/>
    <property type="chains" value="D=1-220"/>
</dbReference>
<dbReference type="PDB" id="6AHU">
    <property type="method" value="EM"/>
    <property type="resolution" value="3.66 A"/>
    <property type="chains" value="D=1-220"/>
</dbReference>
<dbReference type="PDBsum" id="6AHR"/>
<dbReference type="PDBsum" id="6AHU"/>
<dbReference type="EMDB" id="EMD-9626"/>
<dbReference type="EMDB" id="EMD-9627"/>
<dbReference type="SMR" id="O95707"/>
<dbReference type="BioGRID" id="115993">
    <property type="interactions" value="84"/>
</dbReference>
<dbReference type="ComplexPortal" id="CPX-2876">
    <property type="entry name" value="Ribonuclease MRP complex"/>
</dbReference>
<dbReference type="ComplexPortal" id="CPX-2877">
    <property type="entry name" value="Nucleolar ribonuclease P complex"/>
</dbReference>
<dbReference type="CORUM" id="O95707"/>
<dbReference type="FunCoup" id="O95707">
    <property type="interactions" value="1552"/>
</dbReference>
<dbReference type="IntAct" id="O95707">
    <property type="interactions" value="60"/>
</dbReference>
<dbReference type="MINT" id="O95707"/>
<dbReference type="STRING" id="9606.ENSP00000465213"/>
<dbReference type="GlyGen" id="O95707">
    <property type="glycosylation" value="1 site, 1 O-linked glycan (1 site)"/>
</dbReference>
<dbReference type="iPTMnet" id="O95707"/>
<dbReference type="PhosphoSitePlus" id="O95707"/>
<dbReference type="BioMuta" id="POP4"/>
<dbReference type="jPOST" id="O95707"/>
<dbReference type="MassIVE" id="O95707"/>
<dbReference type="PaxDb" id="9606-ENSP00000465213"/>
<dbReference type="PeptideAtlas" id="O95707"/>
<dbReference type="ProteomicsDB" id="51006"/>
<dbReference type="Pumba" id="O95707"/>
<dbReference type="Antibodypedia" id="15541">
    <property type="antibodies" value="153 antibodies from 26 providers"/>
</dbReference>
<dbReference type="DNASU" id="10775"/>
<dbReference type="Ensembl" id="ENST00000585603.6">
    <property type="protein sequence ID" value="ENSP00000465213.1"/>
    <property type="gene ID" value="ENSG00000105171.10"/>
</dbReference>
<dbReference type="GeneID" id="10775"/>
<dbReference type="KEGG" id="hsa:10775"/>
<dbReference type="MANE-Select" id="ENST00000585603.6">
    <property type="protein sequence ID" value="ENSP00000465213.1"/>
    <property type="RefSeq nucleotide sequence ID" value="NM_006627.3"/>
    <property type="RefSeq protein sequence ID" value="NP_006618.1"/>
</dbReference>
<dbReference type="UCSC" id="uc002nsf.3">
    <property type="organism name" value="human"/>
</dbReference>
<dbReference type="AGR" id="HGNC:30081"/>
<dbReference type="CTD" id="10775"/>
<dbReference type="DisGeNET" id="10775"/>
<dbReference type="GeneCards" id="POP4"/>
<dbReference type="HGNC" id="HGNC:30081">
    <property type="gene designation" value="POP4"/>
</dbReference>
<dbReference type="HPA" id="ENSG00000105171">
    <property type="expression patterns" value="Low tissue specificity"/>
</dbReference>
<dbReference type="MIM" id="606114">
    <property type="type" value="gene"/>
</dbReference>
<dbReference type="neXtProt" id="NX_O95707"/>
<dbReference type="OpenTargets" id="ENSG00000105171"/>
<dbReference type="PharmGKB" id="PA134987921"/>
<dbReference type="VEuPathDB" id="HostDB:ENSG00000105171"/>
<dbReference type="eggNOG" id="KOG4046">
    <property type="taxonomic scope" value="Eukaryota"/>
</dbReference>
<dbReference type="GeneTree" id="ENSGT00390000010067"/>
<dbReference type="HOGENOM" id="CLU_078577_2_1_1"/>
<dbReference type="InParanoid" id="O95707"/>
<dbReference type="OMA" id="IPKSECV"/>
<dbReference type="OrthoDB" id="124041at2759"/>
<dbReference type="PAN-GO" id="O95707">
    <property type="GO annotations" value="4 GO annotations based on evolutionary models"/>
</dbReference>
<dbReference type="PhylomeDB" id="O95707"/>
<dbReference type="BRENDA" id="3.1.26.5">
    <property type="organism ID" value="2681"/>
</dbReference>
<dbReference type="PathwayCommons" id="O95707"/>
<dbReference type="Reactome" id="R-HSA-6784531">
    <property type="pathway name" value="tRNA processing in the nucleus"/>
</dbReference>
<dbReference type="SignaLink" id="O95707"/>
<dbReference type="BioGRID-ORCS" id="10775">
    <property type="hits" value="518 hits in 1161 CRISPR screens"/>
</dbReference>
<dbReference type="CD-CODE" id="91857CE7">
    <property type="entry name" value="Nucleolus"/>
</dbReference>
<dbReference type="ChiTaRS" id="POP4">
    <property type="organism name" value="human"/>
</dbReference>
<dbReference type="GenomeRNAi" id="10775"/>
<dbReference type="Pharos" id="O95707">
    <property type="development level" value="Tbio"/>
</dbReference>
<dbReference type="PRO" id="PR:O95707"/>
<dbReference type="Proteomes" id="UP000005640">
    <property type="component" value="Chromosome 19"/>
</dbReference>
<dbReference type="RNAct" id="O95707">
    <property type="molecule type" value="protein"/>
</dbReference>
<dbReference type="Bgee" id="ENSG00000105171">
    <property type="expression patterns" value="Expressed in right adrenal gland and 206 other cell types or tissues"/>
</dbReference>
<dbReference type="ExpressionAtlas" id="O95707">
    <property type="expression patterns" value="baseline and differential"/>
</dbReference>
<dbReference type="GO" id="GO:0030681">
    <property type="term" value="C:multimeric ribonuclease P complex"/>
    <property type="evidence" value="ECO:0000314"/>
    <property type="project" value="UniProtKB"/>
</dbReference>
<dbReference type="GO" id="GO:0005730">
    <property type="term" value="C:nucleolus"/>
    <property type="evidence" value="ECO:0000314"/>
    <property type="project" value="UniProtKB"/>
</dbReference>
<dbReference type="GO" id="GO:0005654">
    <property type="term" value="C:nucleoplasm"/>
    <property type="evidence" value="ECO:0000314"/>
    <property type="project" value="HPA"/>
</dbReference>
<dbReference type="GO" id="GO:0000172">
    <property type="term" value="C:ribonuclease MRP complex"/>
    <property type="evidence" value="ECO:0000318"/>
    <property type="project" value="GO_Central"/>
</dbReference>
<dbReference type="GO" id="GO:0030677">
    <property type="term" value="C:ribonuclease P complex"/>
    <property type="evidence" value="ECO:0000318"/>
    <property type="project" value="GO_Central"/>
</dbReference>
<dbReference type="GO" id="GO:0004526">
    <property type="term" value="F:ribonuclease P activity"/>
    <property type="evidence" value="ECO:0007669"/>
    <property type="project" value="UniProtKB-EC"/>
</dbReference>
<dbReference type="GO" id="GO:0033204">
    <property type="term" value="F:ribonuclease P RNA binding"/>
    <property type="evidence" value="ECO:0000314"/>
    <property type="project" value="UniProtKB"/>
</dbReference>
<dbReference type="GO" id="GO:0006364">
    <property type="term" value="P:rRNA processing"/>
    <property type="evidence" value="ECO:0000318"/>
    <property type="project" value="GO_Central"/>
</dbReference>
<dbReference type="GO" id="GO:0001682">
    <property type="term" value="P:tRNA 5'-leader removal"/>
    <property type="evidence" value="ECO:0000314"/>
    <property type="project" value="UniProtKB"/>
</dbReference>
<dbReference type="FunFam" id="2.30.30.210:FF:000001">
    <property type="entry name" value="Ribonuclease P protein subunit p29"/>
    <property type="match status" value="1"/>
</dbReference>
<dbReference type="Gene3D" id="2.30.30.210">
    <property type="entry name" value="Ribonuclease P/MRP, subunit p29"/>
    <property type="match status" value="1"/>
</dbReference>
<dbReference type="InterPro" id="IPR016848">
    <property type="entry name" value="RNase_P/MRP_Rpp29-subunit"/>
</dbReference>
<dbReference type="InterPro" id="IPR036980">
    <property type="entry name" value="RNase_P/MRP_Rpp29_sf"/>
</dbReference>
<dbReference type="InterPro" id="IPR023534">
    <property type="entry name" value="Rof/RNase_P-like"/>
</dbReference>
<dbReference type="InterPro" id="IPR002730">
    <property type="entry name" value="Rpp29/RNP1"/>
</dbReference>
<dbReference type="PANTHER" id="PTHR13348:SF0">
    <property type="entry name" value="RIBONUCLEASE P PROTEIN SUBUNIT P29"/>
    <property type="match status" value="1"/>
</dbReference>
<dbReference type="PANTHER" id="PTHR13348">
    <property type="entry name" value="RIBONUCLEASE P SUBUNIT P29"/>
    <property type="match status" value="1"/>
</dbReference>
<dbReference type="Pfam" id="PF01868">
    <property type="entry name" value="RNase_P-MRP_p29"/>
    <property type="match status" value="1"/>
</dbReference>
<dbReference type="PIRSF" id="PIRSF027081">
    <property type="entry name" value="RNase_P/MRP_p29_subunit"/>
    <property type="match status" value="1"/>
</dbReference>
<dbReference type="SMART" id="SM00538">
    <property type="entry name" value="POP4"/>
    <property type="match status" value="1"/>
</dbReference>
<dbReference type="SUPFAM" id="SSF101744">
    <property type="entry name" value="Rof/RNase P subunit-like"/>
    <property type="match status" value="1"/>
</dbReference>
<feature type="chain" id="PRO_0000128418" description="Ribonuclease P protein subunit p29">
    <location>
        <begin position="1"/>
        <end position="220"/>
    </location>
</feature>
<feature type="modified residue" description="Phosphoserine" evidence="10 11">
    <location>
        <position position="10"/>
    </location>
</feature>
<feature type="sequence conflict" description="In Ref. 1; AAD00893." evidence="7" ref="1">
    <original>ST</original>
    <variation>TS</variation>
    <location>
        <begin position="38"/>
        <end position="39"/>
    </location>
</feature>
<protein>
    <recommendedName>
        <fullName>Ribonuclease P protein subunit p29</fullName>
        <shortName evidence="6">hPOP4</shortName>
    </recommendedName>
</protein>
<organism>
    <name type="scientific">Homo sapiens</name>
    <name type="common">Human</name>
    <dbReference type="NCBI Taxonomy" id="9606"/>
    <lineage>
        <taxon>Eukaryota</taxon>
        <taxon>Metazoa</taxon>
        <taxon>Chordata</taxon>
        <taxon>Craniata</taxon>
        <taxon>Vertebrata</taxon>
        <taxon>Euteleostomi</taxon>
        <taxon>Mammalia</taxon>
        <taxon>Eutheria</taxon>
        <taxon>Euarchontoglires</taxon>
        <taxon>Primates</taxon>
        <taxon>Haplorrhini</taxon>
        <taxon>Catarrhini</taxon>
        <taxon>Hominidae</taxon>
        <taxon>Homo</taxon>
    </lineage>
</organism>
<sequence>MKSVIYHALSQKEANDSDVQPSGAQRAEAFVRAFLKRSTPRMSPQAREDQLQRKAVVLEYFTRHKRKEKKKKAKGLSARQRRELRLFDIKPEQQRYSLFLPLHELWKQYIRDLCSGLKPDTQPQMIQAKLLKADLHGAIISVTKSKCPSYVGITGILLQETKHIFKIITKEDRLKVIPKLNCVFTVETDGFISYIYGSKFQLRSSERSAKKFKAKGTIDL</sequence>